<proteinExistence type="evidence at transcript level"/>
<sequence>MRVSQSLIPFAIIALVLSFVNAYDPSPLQDFCVAIDDLKGVFVNGRFCKDPERVDAKDFFFSGLNVPGNTNNQVGSNVTTVNVDQIPGLNTMGISLVRIDYAPHGQNPPHTHPRGSEILVLVEGTLYVGFVSSNQDNNRLFAKVLHPGDVFVFPIGMIHFQLNIGKIPAIAFAGLSSQNAGVITIANTVFGSNPPIYPELLARAFQLDANVVKELQAKFGSI</sequence>
<comment type="function">
    <text>May play a role in plant defense. Probably has no oxalate oxidase activity even if the active site is conserved.</text>
</comment>
<comment type="subunit">
    <text evidence="1">Oligomer (believed to be a pentamer but probably hexamer).</text>
</comment>
<comment type="subcellular location">
    <subcellularLocation>
        <location evidence="1">Secreted</location>
        <location evidence="1">Extracellular space</location>
        <location evidence="1">Apoplast</location>
    </subcellularLocation>
</comment>
<comment type="similarity">
    <text evidence="3">Belongs to the germin family.</text>
</comment>
<name>GL116_ARATH</name>
<gene>
    <name type="ordered locus">At5g39130</name>
    <name type="ORF">MXF12.16</name>
    <name type="ORF">MXF12_140</name>
</gene>
<protein>
    <recommendedName>
        <fullName>Germin-like protein subfamily 1 member 16</fullName>
    </recommendedName>
</protein>
<dbReference type="EMBL" id="AB016892">
    <property type="protein sequence ID" value="BAB10834.1"/>
    <property type="molecule type" value="Genomic_DNA"/>
</dbReference>
<dbReference type="EMBL" id="CP002688">
    <property type="protein sequence ID" value="AED94397.1"/>
    <property type="molecule type" value="Genomic_DNA"/>
</dbReference>
<dbReference type="EMBL" id="AY062797">
    <property type="protein sequence ID" value="AAL32875.1"/>
    <property type="molecule type" value="mRNA"/>
</dbReference>
<dbReference type="EMBL" id="BT003354">
    <property type="protein sequence ID" value="AAO29972.1"/>
    <property type="molecule type" value="mRNA"/>
</dbReference>
<dbReference type="RefSeq" id="NP_198729.1">
    <property type="nucleotide sequence ID" value="NM_123275.4"/>
</dbReference>
<dbReference type="SMR" id="Q9FIC8"/>
<dbReference type="FunCoup" id="Q9FIC8">
    <property type="interactions" value="122"/>
</dbReference>
<dbReference type="STRING" id="3702.Q9FIC8"/>
<dbReference type="GlyGen" id="Q9FIC8">
    <property type="glycosylation" value="1 site"/>
</dbReference>
<dbReference type="PaxDb" id="3702-AT5G39130.1"/>
<dbReference type="ProteomicsDB" id="230458"/>
<dbReference type="EnsemblPlants" id="AT5G39130.1">
    <property type="protein sequence ID" value="AT5G39130.1"/>
    <property type="gene ID" value="AT5G39130"/>
</dbReference>
<dbReference type="GeneID" id="833906"/>
<dbReference type="Gramene" id="AT5G39130.1">
    <property type="protein sequence ID" value="AT5G39130.1"/>
    <property type="gene ID" value="AT5G39130"/>
</dbReference>
<dbReference type="KEGG" id="ath:AT5G39130"/>
<dbReference type="Araport" id="AT5G39130"/>
<dbReference type="TAIR" id="AT5G39130"/>
<dbReference type="eggNOG" id="ENOG502QQ4A">
    <property type="taxonomic scope" value="Eukaryota"/>
</dbReference>
<dbReference type="HOGENOM" id="CLU_015790_0_0_1"/>
<dbReference type="InParanoid" id="Q9FIC8"/>
<dbReference type="OMA" id="NAGVIMI"/>
<dbReference type="PhylomeDB" id="Q9FIC8"/>
<dbReference type="PRO" id="PR:Q9FIC8"/>
<dbReference type="Proteomes" id="UP000006548">
    <property type="component" value="Chromosome 5"/>
</dbReference>
<dbReference type="ExpressionAtlas" id="Q9FIC8">
    <property type="expression patterns" value="baseline and differential"/>
</dbReference>
<dbReference type="GO" id="GO:0048046">
    <property type="term" value="C:apoplast"/>
    <property type="evidence" value="ECO:0007669"/>
    <property type="project" value="UniProtKB-SubCell"/>
</dbReference>
<dbReference type="GO" id="GO:0030145">
    <property type="term" value="F:manganese ion binding"/>
    <property type="evidence" value="ECO:0007669"/>
    <property type="project" value="InterPro"/>
</dbReference>
<dbReference type="CDD" id="cd02241">
    <property type="entry name" value="cupin_OxOx"/>
    <property type="match status" value="1"/>
</dbReference>
<dbReference type="FunFam" id="2.60.120.10:FF:000005">
    <property type="entry name" value="Germin-like protein subfamily 1 member 8"/>
    <property type="match status" value="1"/>
</dbReference>
<dbReference type="Gene3D" id="2.60.120.10">
    <property type="entry name" value="Jelly Rolls"/>
    <property type="match status" value="1"/>
</dbReference>
<dbReference type="InterPro" id="IPR006045">
    <property type="entry name" value="Cupin_1"/>
</dbReference>
<dbReference type="InterPro" id="IPR001929">
    <property type="entry name" value="Germin"/>
</dbReference>
<dbReference type="InterPro" id="IPR019780">
    <property type="entry name" value="Germin_Mn-BS"/>
</dbReference>
<dbReference type="InterPro" id="IPR014710">
    <property type="entry name" value="RmlC-like_jellyroll"/>
</dbReference>
<dbReference type="InterPro" id="IPR011051">
    <property type="entry name" value="RmlC_Cupin_sf"/>
</dbReference>
<dbReference type="PANTHER" id="PTHR31238">
    <property type="entry name" value="GERMIN-LIKE PROTEIN SUBFAMILY 3 MEMBER 3"/>
    <property type="match status" value="1"/>
</dbReference>
<dbReference type="Pfam" id="PF00190">
    <property type="entry name" value="Cupin_1"/>
    <property type="match status" value="1"/>
</dbReference>
<dbReference type="PRINTS" id="PR00325">
    <property type="entry name" value="GERMIN"/>
</dbReference>
<dbReference type="SMART" id="SM00835">
    <property type="entry name" value="Cupin_1"/>
    <property type="match status" value="1"/>
</dbReference>
<dbReference type="SUPFAM" id="SSF51182">
    <property type="entry name" value="RmlC-like cupins"/>
    <property type="match status" value="1"/>
</dbReference>
<dbReference type="PROSITE" id="PS00725">
    <property type="entry name" value="GERMIN"/>
    <property type="match status" value="1"/>
</dbReference>
<accession>Q9FIC8</accession>
<evidence type="ECO:0000250" key="1"/>
<evidence type="ECO:0000255" key="2"/>
<evidence type="ECO:0000305" key="3"/>
<feature type="signal peptide" evidence="2">
    <location>
        <begin position="1"/>
        <end position="22"/>
    </location>
</feature>
<feature type="chain" id="PRO_0000010816" description="Germin-like protein subfamily 1 member 16">
    <location>
        <begin position="23"/>
        <end position="222"/>
    </location>
</feature>
<feature type="domain" description="Cupin type-1" evidence="2">
    <location>
        <begin position="62"/>
        <end position="213"/>
    </location>
</feature>
<feature type="binding site" evidence="1">
    <location>
        <position position="110"/>
    </location>
    <ligand>
        <name>Mn(2+)</name>
        <dbReference type="ChEBI" id="CHEBI:29035"/>
    </ligand>
</feature>
<feature type="binding site" evidence="1">
    <location>
        <position position="112"/>
    </location>
    <ligand>
        <name>Mn(2+)</name>
        <dbReference type="ChEBI" id="CHEBI:29035"/>
    </ligand>
</feature>
<feature type="binding site" evidence="1">
    <location>
        <position position="117"/>
    </location>
    <ligand>
        <name>Mn(2+)</name>
        <dbReference type="ChEBI" id="CHEBI:29035"/>
    </ligand>
</feature>
<feature type="binding site" evidence="1">
    <location>
        <position position="159"/>
    </location>
    <ligand>
        <name>Mn(2+)</name>
        <dbReference type="ChEBI" id="CHEBI:29035"/>
    </ligand>
</feature>
<feature type="glycosylation site" description="N-linked (GlcNAc...) asparagine" evidence="2">
    <location>
        <position position="77"/>
    </location>
</feature>
<feature type="disulfide bond" evidence="1">
    <location>
        <begin position="32"/>
        <end position="48"/>
    </location>
</feature>
<organism>
    <name type="scientific">Arabidopsis thaliana</name>
    <name type="common">Mouse-ear cress</name>
    <dbReference type="NCBI Taxonomy" id="3702"/>
    <lineage>
        <taxon>Eukaryota</taxon>
        <taxon>Viridiplantae</taxon>
        <taxon>Streptophyta</taxon>
        <taxon>Embryophyta</taxon>
        <taxon>Tracheophyta</taxon>
        <taxon>Spermatophyta</taxon>
        <taxon>Magnoliopsida</taxon>
        <taxon>eudicotyledons</taxon>
        <taxon>Gunneridae</taxon>
        <taxon>Pentapetalae</taxon>
        <taxon>rosids</taxon>
        <taxon>malvids</taxon>
        <taxon>Brassicales</taxon>
        <taxon>Brassicaceae</taxon>
        <taxon>Camelineae</taxon>
        <taxon>Arabidopsis</taxon>
    </lineage>
</organism>
<keyword id="KW-0052">Apoplast</keyword>
<keyword id="KW-1015">Disulfide bond</keyword>
<keyword id="KW-0325">Glycoprotein</keyword>
<keyword id="KW-0464">Manganese</keyword>
<keyword id="KW-0479">Metal-binding</keyword>
<keyword id="KW-1185">Reference proteome</keyword>
<keyword id="KW-0964">Secreted</keyword>
<keyword id="KW-0732">Signal</keyword>
<reference key="1">
    <citation type="journal article" date="1998" name="DNA Res.">
        <title>Structural analysis of Arabidopsis thaliana chromosome 5. VIII. Sequence features of the regions of 1,081,958 bp covered by seventeen physically assigned P1 and TAC clones.</title>
        <authorList>
            <person name="Asamizu E."/>
            <person name="Sato S."/>
            <person name="Kaneko T."/>
            <person name="Nakamura Y."/>
            <person name="Kotani H."/>
            <person name="Miyajima N."/>
            <person name="Tabata S."/>
        </authorList>
    </citation>
    <scope>NUCLEOTIDE SEQUENCE [LARGE SCALE GENOMIC DNA]</scope>
    <source>
        <strain>cv. Columbia</strain>
    </source>
</reference>
<reference key="2">
    <citation type="journal article" date="2017" name="Plant J.">
        <title>Araport11: a complete reannotation of the Arabidopsis thaliana reference genome.</title>
        <authorList>
            <person name="Cheng C.Y."/>
            <person name="Krishnakumar V."/>
            <person name="Chan A.P."/>
            <person name="Thibaud-Nissen F."/>
            <person name="Schobel S."/>
            <person name="Town C.D."/>
        </authorList>
    </citation>
    <scope>GENOME REANNOTATION</scope>
    <source>
        <strain>cv. Columbia</strain>
    </source>
</reference>
<reference key="3">
    <citation type="journal article" date="2003" name="Science">
        <title>Empirical analysis of transcriptional activity in the Arabidopsis genome.</title>
        <authorList>
            <person name="Yamada K."/>
            <person name="Lim J."/>
            <person name="Dale J.M."/>
            <person name="Chen H."/>
            <person name="Shinn P."/>
            <person name="Palm C.J."/>
            <person name="Southwick A.M."/>
            <person name="Wu H.C."/>
            <person name="Kim C.J."/>
            <person name="Nguyen M."/>
            <person name="Pham P.K."/>
            <person name="Cheuk R.F."/>
            <person name="Karlin-Newmann G."/>
            <person name="Liu S.X."/>
            <person name="Lam B."/>
            <person name="Sakano H."/>
            <person name="Wu T."/>
            <person name="Yu G."/>
            <person name="Miranda M."/>
            <person name="Quach H.L."/>
            <person name="Tripp M."/>
            <person name="Chang C.H."/>
            <person name="Lee J.M."/>
            <person name="Toriumi M.J."/>
            <person name="Chan M.M."/>
            <person name="Tang C.C."/>
            <person name="Onodera C.S."/>
            <person name="Deng J.M."/>
            <person name="Akiyama K."/>
            <person name="Ansari Y."/>
            <person name="Arakawa T."/>
            <person name="Banh J."/>
            <person name="Banno F."/>
            <person name="Bowser L."/>
            <person name="Brooks S.Y."/>
            <person name="Carninci P."/>
            <person name="Chao Q."/>
            <person name="Choy N."/>
            <person name="Enju A."/>
            <person name="Goldsmith A.D."/>
            <person name="Gurjal M."/>
            <person name="Hansen N.F."/>
            <person name="Hayashizaki Y."/>
            <person name="Johnson-Hopson C."/>
            <person name="Hsuan V.W."/>
            <person name="Iida K."/>
            <person name="Karnes M."/>
            <person name="Khan S."/>
            <person name="Koesema E."/>
            <person name="Ishida J."/>
            <person name="Jiang P.X."/>
            <person name="Jones T."/>
            <person name="Kawai J."/>
            <person name="Kamiya A."/>
            <person name="Meyers C."/>
            <person name="Nakajima M."/>
            <person name="Narusaka M."/>
            <person name="Seki M."/>
            <person name="Sakurai T."/>
            <person name="Satou M."/>
            <person name="Tamse R."/>
            <person name="Vaysberg M."/>
            <person name="Wallender E.K."/>
            <person name="Wong C."/>
            <person name="Yamamura Y."/>
            <person name="Yuan S."/>
            <person name="Shinozaki K."/>
            <person name="Davis R.W."/>
            <person name="Theologis A."/>
            <person name="Ecker J.R."/>
        </authorList>
    </citation>
    <scope>NUCLEOTIDE SEQUENCE [LARGE SCALE MRNA]</scope>
    <source>
        <strain>cv. Columbia</strain>
    </source>
</reference>